<proteinExistence type="evidence at protein level"/>
<sequence length="15" mass="1851">DDDDDDHTIEHFETF</sequence>
<comment type="subcellular location">
    <subcellularLocation>
        <location evidence="1">Secreted</location>
    </subcellularLocation>
</comment>
<dbReference type="GO" id="GO:0005576">
    <property type="term" value="C:extracellular region"/>
    <property type="evidence" value="ECO:0007669"/>
    <property type="project" value="UniProtKB-SubCell"/>
</dbReference>
<accession>P86691</accession>
<reference evidence="2" key="1">
    <citation type="submission" date="2010-06" db="UniProtKB">
        <authorList>
            <person name="Radha A."/>
            <person name="Pradeep K.G."/>
            <person name="Sreesha S."/>
            <person name="Akbarsha M.A."/>
            <person name="Oommen O.V."/>
        </authorList>
    </citation>
    <scope>PROTEIN SEQUENCE</scope>
    <scope>SUBCELLULAR LOCATION</scope>
    <source>
        <tissue>Muellerian gland</tissue>
    </source>
</reference>
<name>UP2_ICHTR</name>
<feature type="chain" id="PRO_0000397239" description="Unknown protein 2">
    <location>
        <begin position="1"/>
        <end position="15" status="greater than"/>
    </location>
</feature>
<feature type="non-terminal residue">
    <location>
        <position position="15"/>
    </location>
</feature>
<protein>
    <recommendedName>
        <fullName>Unknown protein 2</fullName>
    </recommendedName>
</protein>
<organism>
    <name type="scientific">Ichthyophis tricolor</name>
    <name type="common">Three-colored caecilian</name>
    <name type="synonym">Ichthyophis glutinosus tricolor</name>
    <dbReference type="NCBI Taxonomy" id="194527"/>
    <lineage>
        <taxon>Eukaryota</taxon>
        <taxon>Metazoa</taxon>
        <taxon>Chordata</taxon>
        <taxon>Craniata</taxon>
        <taxon>Vertebrata</taxon>
        <taxon>Euteleostomi</taxon>
        <taxon>Amphibia</taxon>
        <taxon>Gymnophiona</taxon>
        <taxon>Ichthyophiidae</taxon>
        <taxon>Ichthyophis</taxon>
    </lineage>
</organism>
<keyword id="KW-0903">Direct protein sequencing</keyword>
<keyword id="KW-0964">Secreted</keyword>
<evidence type="ECO:0000269" key="1">
    <source ref="1"/>
</evidence>
<evidence type="ECO:0000305" key="2"/>